<keyword id="KW-0687">Ribonucleoprotein</keyword>
<keyword id="KW-0689">Ribosomal protein</keyword>
<organism>
    <name type="scientific">Pisum sativum</name>
    <name type="common">Garden pea</name>
    <name type="synonym">Lathyrus oleraceus</name>
    <dbReference type="NCBI Taxonomy" id="3888"/>
    <lineage>
        <taxon>Eukaryota</taxon>
        <taxon>Viridiplantae</taxon>
        <taxon>Streptophyta</taxon>
        <taxon>Embryophyta</taxon>
        <taxon>Tracheophyta</taxon>
        <taxon>Spermatophyta</taxon>
        <taxon>Magnoliopsida</taxon>
        <taxon>eudicotyledons</taxon>
        <taxon>Gunneridae</taxon>
        <taxon>Pentapetalae</taxon>
        <taxon>rosids</taxon>
        <taxon>fabids</taxon>
        <taxon>Fabales</taxon>
        <taxon>Fabaceae</taxon>
        <taxon>Papilionoideae</taxon>
        <taxon>50 kb inversion clade</taxon>
        <taxon>NPAAA clade</taxon>
        <taxon>Hologalegina</taxon>
        <taxon>IRL clade</taxon>
        <taxon>Fabeae</taxon>
        <taxon>Pisum</taxon>
    </lineage>
</organism>
<feature type="chain" id="PRO_0000198067" description="Small ribosomal subunit protein eS32">
    <location>
        <begin position="1"/>
        <end position="25"/>
    </location>
</feature>
<feature type="region of interest" description="Disordered" evidence="1">
    <location>
        <begin position="1"/>
        <end position="25"/>
    </location>
</feature>
<reference key="1">
    <citation type="submission" date="1995-10" db="EMBL/GenBank/DDBJ databases">
        <authorList>
            <person name="Woo H.H."/>
        </authorList>
    </citation>
    <scope>NUCLEOTIDE SEQUENCE [MRNA]</scope>
    <source>
        <strain>cv. Little Marvel</strain>
        <tissue>Root tip</tissue>
    </source>
</reference>
<reference key="2">
    <citation type="unpublished observations" date="2023-10">
        <authorList>
            <person name="Leibundgut M.A."/>
            <person name="Ban N."/>
        </authorList>
    </citation>
    <scope>REVISION OF SUBUNIT</scope>
    <scope>NOMENCLATURE</scope>
</reference>
<proteinExistence type="evidence at protein level"/>
<sequence>MRAKWKKKRMRRLKRKRRKMRQRSK</sequence>
<evidence type="ECO:0000256" key="1">
    <source>
        <dbReference type="SAM" id="MobiDB-lite"/>
    </source>
</evidence>
<evidence type="ECO:0000305" key="2"/>
<evidence type="ECO:0000305" key="3">
    <source ref="2"/>
</evidence>
<gene>
    <name type="primary">RPL41</name>
</gene>
<accession>P62123</accession>
<accession>P35015</accession>
<protein>
    <recommendedName>
        <fullName evidence="3">Small ribosomal subunit protein eS32</fullName>
    </recommendedName>
    <alternativeName>
        <fullName>60S ribosomal protein L41</fullName>
    </alternativeName>
    <alternativeName>
        <fullName evidence="2">Large ribosomal subunit protein eL41</fullName>
    </alternativeName>
</protein>
<name>RS32_PEA</name>
<dbReference type="EMBL" id="L47967">
    <property type="protein sequence ID" value="AAA79268.1"/>
    <property type="molecule type" value="mRNA"/>
</dbReference>
<dbReference type="SMR" id="P62123"/>
<dbReference type="GO" id="GO:1990904">
    <property type="term" value="C:ribonucleoprotein complex"/>
    <property type="evidence" value="ECO:0007669"/>
    <property type="project" value="UniProtKB-KW"/>
</dbReference>
<dbReference type="GO" id="GO:0005840">
    <property type="term" value="C:ribosome"/>
    <property type="evidence" value="ECO:0007669"/>
    <property type="project" value="UniProtKB-KW"/>
</dbReference>
<dbReference type="GO" id="GO:0003735">
    <property type="term" value="F:structural constituent of ribosome"/>
    <property type="evidence" value="ECO:0007669"/>
    <property type="project" value="InterPro"/>
</dbReference>
<dbReference type="GO" id="GO:0006412">
    <property type="term" value="P:translation"/>
    <property type="evidence" value="ECO:0007669"/>
    <property type="project" value="InterPro"/>
</dbReference>
<dbReference type="InterPro" id="IPR007836">
    <property type="entry name" value="Ribosomal_eS32"/>
</dbReference>
<dbReference type="Pfam" id="PF05162">
    <property type="entry name" value="Ribosomal_L41"/>
    <property type="match status" value="1"/>
</dbReference>
<comment type="subunit">
    <text evidence="3">Component of the small ribosomal subunit (SSU) (Ref.2).</text>
</comment>
<comment type="miscellaneous">
    <text evidence="3">Initially thought to be part of the large ribosomal subunit. Crystal structures show eS32/eL41 to be a small ribosomal subunit forming a bridge at the interface of the 2 subunits.</text>
</comment>
<comment type="similarity">
    <text evidence="2">Belongs to the eukaryotic ribosomal protein eS32 family.</text>
</comment>